<feature type="chain" id="PRO_0000072200" description="Serendipity locus protein alpha">
    <location>
        <begin position="1"/>
        <end position="537"/>
    </location>
</feature>
<dbReference type="EMBL" id="AF084637">
    <property type="protein sequence ID" value="AAC69336.1"/>
    <property type="molecule type" value="Genomic_DNA"/>
</dbReference>
<dbReference type="SMR" id="O77201"/>
<dbReference type="eggNOG" id="ENOG502SBC0">
    <property type="taxonomic scope" value="Eukaryota"/>
</dbReference>
<dbReference type="OrthoDB" id="6342160at2759"/>
<dbReference type="GO" id="GO:0005912">
    <property type="term" value="C:adherens junction"/>
    <property type="evidence" value="ECO:0007669"/>
    <property type="project" value="TreeGrafter"/>
</dbReference>
<dbReference type="GO" id="GO:0016342">
    <property type="term" value="C:catenin complex"/>
    <property type="evidence" value="ECO:0007669"/>
    <property type="project" value="TreeGrafter"/>
</dbReference>
<dbReference type="GO" id="GO:0032154">
    <property type="term" value="C:cleavage furrow"/>
    <property type="evidence" value="ECO:0007669"/>
    <property type="project" value="EnsemblMetazoa"/>
</dbReference>
<dbReference type="GO" id="GO:0005829">
    <property type="term" value="C:cytosol"/>
    <property type="evidence" value="ECO:0007669"/>
    <property type="project" value="EnsemblMetazoa"/>
</dbReference>
<dbReference type="GO" id="GO:0051015">
    <property type="term" value="F:actin filament binding"/>
    <property type="evidence" value="ECO:0007669"/>
    <property type="project" value="TreeGrafter"/>
</dbReference>
<dbReference type="GO" id="GO:0008013">
    <property type="term" value="F:beta-catenin binding"/>
    <property type="evidence" value="ECO:0007669"/>
    <property type="project" value="TreeGrafter"/>
</dbReference>
<dbReference type="GO" id="GO:0007015">
    <property type="term" value="P:actin filament organization"/>
    <property type="evidence" value="ECO:0007669"/>
    <property type="project" value="EnsemblMetazoa"/>
</dbReference>
<dbReference type="GO" id="GO:0016477">
    <property type="term" value="P:cell migration"/>
    <property type="evidence" value="ECO:0007669"/>
    <property type="project" value="TreeGrafter"/>
</dbReference>
<dbReference type="GO" id="GO:0098609">
    <property type="term" value="P:cell-cell adhesion"/>
    <property type="evidence" value="ECO:0007669"/>
    <property type="project" value="TreeGrafter"/>
</dbReference>
<dbReference type="GO" id="GO:0007349">
    <property type="term" value="P:cellularization"/>
    <property type="evidence" value="ECO:0007669"/>
    <property type="project" value="EnsemblMetazoa"/>
</dbReference>
<dbReference type="Gene3D" id="1.20.120.810">
    <property type="entry name" value="Vinculin, Vh2 four-helix bundle"/>
    <property type="match status" value="1"/>
</dbReference>
<dbReference type="InterPro" id="IPR008837">
    <property type="entry name" value="Serendipity_A"/>
</dbReference>
<dbReference type="PANTHER" id="PTHR18914">
    <property type="entry name" value="ALPHA CATENIN"/>
    <property type="match status" value="1"/>
</dbReference>
<dbReference type="PANTHER" id="PTHR18914:SF33">
    <property type="entry name" value="RE47911P-RELATED"/>
    <property type="match status" value="1"/>
</dbReference>
<dbReference type="Pfam" id="PF05482">
    <property type="entry name" value="Serendipity_A"/>
    <property type="match status" value="1"/>
</dbReference>
<proteinExistence type="inferred from homology"/>
<organism>
    <name type="scientific">Drosophila virilis</name>
    <name type="common">Fruit fly</name>
    <dbReference type="NCBI Taxonomy" id="7244"/>
    <lineage>
        <taxon>Eukaryota</taxon>
        <taxon>Metazoa</taxon>
        <taxon>Ecdysozoa</taxon>
        <taxon>Arthropoda</taxon>
        <taxon>Hexapoda</taxon>
        <taxon>Insecta</taxon>
        <taxon>Pterygota</taxon>
        <taxon>Neoptera</taxon>
        <taxon>Endopterygota</taxon>
        <taxon>Diptera</taxon>
        <taxon>Brachycera</taxon>
        <taxon>Muscomorpha</taxon>
        <taxon>Ephydroidea</taxon>
        <taxon>Drosophilidae</taxon>
        <taxon>Drosophila</taxon>
    </lineage>
</organism>
<accession>O77201</accession>
<reference evidence="2" key="1">
    <citation type="journal article" date="1998" name="Mol. Gen. Genet.">
        <title>Conservation of read-through transcription of the Drosophila serendipity genes during evolution is gratuitous.</title>
        <authorList>
            <person name="Ibnsouda S."/>
            <person name="Ferrer P."/>
            <person name="Vincent A."/>
        </authorList>
    </citation>
    <scope>NUCLEOTIDE SEQUENCE [GENOMIC DNA]</scope>
</reference>
<name>SRYA_DROVI</name>
<keyword id="KW-1003">Cell membrane</keyword>
<keyword id="KW-0963">Cytoplasm</keyword>
<keyword id="KW-0217">Developmental protein</keyword>
<keyword id="KW-0472">Membrane</keyword>
<sequence>MDKLYLQLNLCTDIIEKGATCHTAKIAWLNEFCAAFHTFASKFKSYLIELAPKNELEGNIRIHVETIYLCFTQVITCITQLERTINIEGTLAAGAQLLATRTHFLDRIDWCLRRLQASVYQLAEEAIASTPVKLEDLSFVELLDLALDKLETYSEIVPAQSQAEQEDSDEIDQLVDHVNHLIKHALAFANVALESDKKALSAIYETVLEESGIFEKNFKTHNPNRRKLEALSLQPALYSLETYLNEALFDLIFTSMFDTEKASIKRLRNVLQSCESSGAVDGLLSDFDINVDRIQQIGIFAIAFTQDVKTKTIIRSCLASLESLDACIVPAFQLQTTSLASYHADILEHHFRQELMVFRNVIHEIIDSRALINNYLDILAESIDNAEKLYPKGYLLQVAQMGNVIYQHFQLRANNQELIADEEGKRLHQDFVAILHECQAVLEISVHVDLKRIIKRLKILYSILAKLRDVCDKLVYERAMSNNEKSMTTSTKLRQHSFANPEIGHTIANCNRTDSSDSLSHESDLISFQLTEILRIT</sequence>
<protein>
    <recommendedName>
        <fullName>Serendipity locus protein alpha</fullName>
    </recommendedName>
</protein>
<comment type="function">
    <text evidence="1">Required for the cellularization of the syncytial blastoderm embryo. Involved in the localization of the actin filaments just prior to and during plasma membrane invagination. Sry-alpha together with nullo and bnk may provide auxiliary functions, by acting both to stabilize a large and dynamic microfilament structure and regulate its functions (By similarity).</text>
</comment>
<comment type="subcellular location">
    <subcellularLocation>
        <location evidence="1">Cytoplasm</location>
    </subcellularLocation>
    <subcellularLocation>
        <location evidence="1">Cell membrane</location>
        <topology evidence="1">Peripheral membrane protein</topology>
        <orientation evidence="1">Cytoplasmic side</orientation>
    </subcellularLocation>
    <text evidence="1">Inner membrane-associated and cytoplasmic.</text>
</comment>
<evidence type="ECO:0000250" key="1"/>
<evidence type="ECO:0000312" key="2">
    <source>
        <dbReference type="EMBL" id="AAC69336.1"/>
    </source>
</evidence>
<gene>
    <name type="primary">Sry-alpha</name>
</gene>